<protein>
    <recommendedName>
        <fullName evidence="1">Arginine--tRNA ligase</fullName>
        <ecNumber evidence="1">6.1.1.19</ecNumber>
    </recommendedName>
    <alternativeName>
        <fullName evidence="1">Arginyl-tRNA synthetase</fullName>
        <shortName evidence="1">ArgRS</shortName>
    </alternativeName>
</protein>
<gene>
    <name evidence="1" type="primary">argS</name>
    <name type="ordered locus">rrnAC3169</name>
</gene>
<proteinExistence type="inferred from homology"/>
<feature type="chain" id="PRO_0000242128" description="Arginine--tRNA ligase">
    <location>
        <begin position="1"/>
        <end position="579"/>
    </location>
</feature>
<feature type="short sequence motif" description="'HIGH' region">
    <location>
        <begin position="123"/>
        <end position="133"/>
    </location>
</feature>
<dbReference type="EC" id="6.1.1.19" evidence="1"/>
<dbReference type="EMBL" id="AY596297">
    <property type="protein sequence ID" value="AAV47875.1"/>
    <property type="molecule type" value="Genomic_DNA"/>
</dbReference>
<dbReference type="RefSeq" id="WP_011224649.1">
    <property type="nucleotide sequence ID" value="NC_006396.1"/>
</dbReference>
<dbReference type="SMR" id="Q5UXX8"/>
<dbReference type="STRING" id="272569.rrnAC3169"/>
<dbReference type="PaxDb" id="272569-rrnAC3169"/>
<dbReference type="EnsemblBacteria" id="AAV47875">
    <property type="protein sequence ID" value="AAV47875"/>
    <property type="gene ID" value="rrnAC3169"/>
</dbReference>
<dbReference type="GeneID" id="40153977"/>
<dbReference type="KEGG" id="hma:rrnAC3169"/>
<dbReference type="PATRIC" id="fig|272569.17.peg.3709"/>
<dbReference type="eggNOG" id="arCOG00487">
    <property type="taxonomic scope" value="Archaea"/>
</dbReference>
<dbReference type="HOGENOM" id="CLU_006406_6_1_2"/>
<dbReference type="Proteomes" id="UP000001169">
    <property type="component" value="Chromosome I"/>
</dbReference>
<dbReference type="GO" id="GO:0005737">
    <property type="term" value="C:cytoplasm"/>
    <property type="evidence" value="ECO:0007669"/>
    <property type="project" value="UniProtKB-SubCell"/>
</dbReference>
<dbReference type="GO" id="GO:0004814">
    <property type="term" value="F:arginine-tRNA ligase activity"/>
    <property type="evidence" value="ECO:0007669"/>
    <property type="project" value="UniProtKB-UniRule"/>
</dbReference>
<dbReference type="GO" id="GO:0005524">
    <property type="term" value="F:ATP binding"/>
    <property type="evidence" value="ECO:0007669"/>
    <property type="project" value="UniProtKB-UniRule"/>
</dbReference>
<dbReference type="GO" id="GO:0006420">
    <property type="term" value="P:arginyl-tRNA aminoacylation"/>
    <property type="evidence" value="ECO:0007669"/>
    <property type="project" value="UniProtKB-UniRule"/>
</dbReference>
<dbReference type="CDD" id="cd07956">
    <property type="entry name" value="Anticodon_Ia_Arg"/>
    <property type="match status" value="1"/>
</dbReference>
<dbReference type="CDD" id="cd00671">
    <property type="entry name" value="ArgRS_core"/>
    <property type="match status" value="1"/>
</dbReference>
<dbReference type="FunFam" id="1.10.730.10:FF:000006">
    <property type="entry name" value="Arginyl-tRNA synthetase 2, mitochondrial"/>
    <property type="match status" value="1"/>
</dbReference>
<dbReference type="Gene3D" id="3.30.1360.70">
    <property type="entry name" value="Arginyl tRNA synthetase N-terminal domain"/>
    <property type="match status" value="1"/>
</dbReference>
<dbReference type="Gene3D" id="3.40.50.620">
    <property type="entry name" value="HUPs"/>
    <property type="match status" value="1"/>
</dbReference>
<dbReference type="Gene3D" id="1.10.730.10">
    <property type="entry name" value="Isoleucyl-tRNA Synthetase, Domain 1"/>
    <property type="match status" value="1"/>
</dbReference>
<dbReference type="HAMAP" id="MF_00123">
    <property type="entry name" value="Arg_tRNA_synth"/>
    <property type="match status" value="1"/>
</dbReference>
<dbReference type="InterPro" id="IPR001278">
    <property type="entry name" value="Arg-tRNA-ligase"/>
</dbReference>
<dbReference type="InterPro" id="IPR005148">
    <property type="entry name" value="Arg-tRNA-synth_N"/>
</dbReference>
<dbReference type="InterPro" id="IPR036695">
    <property type="entry name" value="Arg-tRNA-synth_N_sf"/>
</dbReference>
<dbReference type="InterPro" id="IPR035684">
    <property type="entry name" value="ArgRS_core"/>
</dbReference>
<dbReference type="InterPro" id="IPR008909">
    <property type="entry name" value="DALR_anticod-bd"/>
</dbReference>
<dbReference type="InterPro" id="IPR014729">
    <property type="entry name" value="Rossmann-like_a/b/a_fold"/>
</dbReference>
<dbReference type="InterPro" id="IPR009080">
    <property type="entry name" value="tRNAsynth_Ia_anticodon-bd"/>
</dbReference>
<dbReference type="NCBIfam" id="TIGR00456">
    <property type="entry name" value="argS"/>
    <property type="match status" value="1"/>
</dbReference>
<dbReference type="PANTHER" id="PTHR11956:SF5">
    <property type="entry name" value="ARGININE--TRNA LIGASE, CYTOPLASMIC"/>
    <property type="match status" value="1"/>
</dbReference>
<dbReference type="PANTHER" id="PTHR11956">
    <property type="entry name" value="ARGINYL-TRNA SYNTHETASE"/>
    <property type="match status" value="1"/>
</dbReference>
<dbReference type="Pfam" id="PF03485">
    <property type="entry name" value="Arg_tRNA_synt_N"/>
    <property type="match status" value="1"/>
</dbReference>
<dbReference type="Pfam" id="PF05746">
    <property type="entry name" value="DALR_1"/>
    <property type="match status" value="1"/>
</dbReference>
<dbReference type="Pfam" id="PF00750">
    <property type="entry name" value="tRNA-synt_1d"/>
    <property type="match status" value="1"/>
</dbReference>
<dbReference type="PRINTS" id="PR01038">
    <property type="entry name" value="TRNASYNTHARG"/>
</dbReference>
<dbReference type="SMART" id="SM01016">
    <property type="entry name" value="Arg_tRNA_synt_N"/>
    <property type="match status" value="1"/>
</dbReference>
<dbReference type="SMART" id="SM00836">
    <property type="entry name" value="DALR_1"/>
    <property type="match status" value="1"/>
</dbReference>
<dbReference type="SUPFAM" id="SSF47323">
    <property type="entry name" value="Anticodon-binding domain of a subclass of class I aminoacyl-tRNA synthetases"/>
    <property type="match status" value="1"/>
</dbReference>
<dbReference type="SUPFAM" id="SSF55190">
    <property type="entry name" value="Arginyl-tRNA synthetase (ArgRS), N-terminal 'additional' domain"/>
    <property type="match status" value="1"/>
</dbReference>
<dbReference type="SUPFAM" id="SSF52374">
    <property type="entry name" value="Nucleotidylyl transferase"/>
    <property type="match status" value="1"/>
</dbReference>
<comment type="catalytic activity">
    <reaction evidence="1">
        <text>tRNA(Arg) + L-arginine + ATP = L-arginyl-tRNA(Arg) + AMP + diphosphate</text>
        <dbReference type="Rhea" id="RHEA:20301"/>
        <dbReference type="Rhea" id="RHEA-COMP:9658"/>
        <dbReference type="Rhea" id="RHEA-COMP:9673"/>
        <dbReference type="ChEBI" id="CHEBI:30616"/>
        <dbReference type="ChEBI" id="CHEBI:32682"/>
        <dbReference type="ChEBI" id="CHEBI:33019"/>
        <dbReference type="ChEBI" id="CHEBI:78442"/>
        <dbReference type="ChEBI" id="CHEBI:78513"/>
        <dbReference type="ChEBI" id="CHEBI:456215"/>
        <dbReference type="EC" id="6.1.1.19"/>
    </reaction>
</comment>
<comment type="subcellular location">
    <subcellularLocation>
        <location evidence="1">Cytoplasm</location>
    </subcellularLocation>
</comment>
<comment type="similarity">
    <text evidence="1">Belongs to the class-I aminoacyl-tRNA synthetase family.</text>
</comment>
<sequence length="579" mass="64318">MFLQLRAEVEDALADALTTLDLPAEDLGIEEPPEDVDAVLASSVAFRLAGEVGTAPPNVASDIADAIAADDLTYVSDVTTQGPYVNFLPSEAYFAETLQSVTESGFGRLPDRDTSVVVEHTSANPTGPVHVGRARNPIIGDAVARVLDYAGYDVDRHYYVNDAGRQIAVFTWAYETFDEDDLPEPERESPEYEMVRYYRKGNTILEDGDPDEVEAAEAEVQSILQGLEDGDEETYERVAEVVDTVLGGMQNTLGRLPAEFDEFVKETKFMRNGDTDDLVDRLKGLDCAVYEEDAWQLDLPDFEKNLVFLRSDGTSLYTTRDLAHHEWKFDTYDRAVTVLGEDHKLQADQLAAALELLDNDTDQLRQVFYSWVNLPEGGMSTREGTGIDLDDLLDEAIDRAREEVESRLDDRTRGDLDEDDIDRIARQVGIGAVRYDIVSKQPTKGITFEWDRALDFEAQSAPYVQYVHARCCGILGDVETDIPDEPDLDPLSEPEERDLLRELARFPAVIEAAADDLTPHTVATYTRDLAETFNAFYRECPVLDADPETRAARLALVDGTRTTIANALDALGVEAPTSM</sequence>
<organism>
    <name type="scientific">Haloarcula marismortui (strain ATCC 43049 / DSM 3752 / JCM 8966 / VKM B-1809)</name>
    <name type="common">Halobacterium marismortui</name>
    <dbReference type="NCBI Taxonomy" id="272569"/>
    <lineage>
        <taxon>Archaea</taxon>
        <taxon>Methanobacteriati</taxon>
        <taxon>Methanobacteriota</taxon>
        <taxon>Stenosarchaea group</taxon>
        <taxon>Halobacteria</taxon>
        <taxon>Halobacteriales</taxon>
        <taxon>Haloarculaceae</taxon>
        <taxon>Haloarcula</taxon>
    </lineage>
</organism>
<evidence type="ECO:0000255" key="1">
    <source>
        <dbReference type="HAMAP-Rule" id="MF_00123"/>
    </source>
</evidence>
<keyword id="KW-0030">Aminoacyl-tRNA synthetase</keyword>
<keyword id="KW-0067">ATP-binding</keyword>
<keyword id="KW-0963">Cytoplasm</keyword>
<keyword id="KW-0436">Ligase</keyword>
<keyword id="KW-0547">Nucleotide-binding</keyword>
<keyword id="KW-0648">Protein biosynthesis</keyword>
<keyword id="KW-1185">Reference proteome</keyword>
<accession>Q5UXX8</accession>
<reference key="1">
    <citation type="journal article" date="2004" name="Genome Res.">
        <title>Genome sequence of Haloarcula marismortui: a halophilic archaeon from the Dead Sea.</title>
        <authorList>
            <person name="Baliga N.S."/>
            <person name="Bonneau R."/>
            <person name="Facciotti M.T."/>
            <person name="Pan M."/>
            <person name="Glusman G."/>
            <person name="Deutsch E.W."/>
            <person name="Shannon P."/>
            <person name="Chiu Y."/>
            <person name="Weng R.S."/>
            <person name="Gan R.R."/>
            <person name="Hung P."/>
            <person name="Date S.V."/>
            <person name="Marcotte E."/>
            <person name="Hood L."/>
            <person name="Ng W.V."/>
        </authorList>
    </citation>
    <scope>NUCLEOTIDE SEQUENCE [LARGE SCALE GENOMIC DNA]</scope>
    <source>
        <strain>ATCC 43049 / DSM 3752 / JCM 8966 / VKM B-1809</strain>
    </source>
</reference>
<name>SYR_HALMA</name>